<accession>Q49W03</accession>
<dbReference type="EC" id="4.2.1.11" evidence="1"/>
<dbReference type="EMBL" id="AP008934">
    <property type="protein sequence ID" value="BAE19057.1"/>
    <property type="molecule type" value="Genomic_DNA"/>
</dbReference>
<dbReference type="RefSeq" id="WP_011303585.1">
    <property type="nucleotide sequence ID" value="NZ_MTGA01000039.1"/>
</dbReference>
<dbReference type="SMR" id="Q49W03"/>
<dbReference type="GeneID" id="66868096"/>
<dbReference type="KEGG" id="ssp:SSP1912"/>
<dbReference type="eggNOG" id="COG0148">
    <property type="taxonomic scope" value="Bacteria"/>
</dbReference>
<dbReference type="HOGENOM" id="CLU_031223_2_1_9"/>
<dbReference type="OrthoDB" id="9804716at2"/>
<dbReference type="UniPathway" id="UPA00109">
    <property type="reaction ID" value="UER00187"/>
</dbReference>
<dbReference type="Proteomes" id="UP000006371">
    <property type="component" value="Chromosome"/>
</dbReference>
<dbReference type="GO" id="GO:0009986">
    <property type="term" value="C:cell surface"/>
    <property type="evidence" value="ECO:0007669"/>
    <property type="project" value="UniProtKB-SubCell"/>
</dbReference>
<dbReference type="GO" id="GO:0005576">
    <property type="term" value="C:extracellular region"/>
    <property type="evidence" value="ECO:0007669"/>
    <property type="project" value="UniProtKB-SubCell"/>
</dbReference>
<dbReference type="GO" id="GO:0000015">
    <property type="term" value="C:phosphopyruvate hydratase complex"/>
    <property type="evidence" value="ECO:0007669"/>
    <property type="project" value="InterPro"/>
</dbReference>
<dbReference type="GO" id="GO:0000287">
    <property type="term" value="F:magnesium ion binding"/>
    <property type="evidence" value="ECO:0007669"/>
    <property type="project" value="UniProtKB-UniRule"/>
</dbReference>
<dbReference type="GO" id="GO:0004634">
    <property type="term" value="F:phosphopyruvate hydratase activity"/>
    <property type="evidence" value="ECO:0007669"/>
    <property type="project" value="UniProtKB-UniRule"/>
</dbReference>
<dbReference type="GO" id="GO:0006096">
    <property type="term" value="P:glycolytic process"/>
    <property type="evidence" value="ECO:0007669"/>
    <property type="project" value="UniProtKB-UniRule"/>
</dbReference>
<dbReference type="CDD" id="cd03313">
    <property type="entry name" value="enolase"/>
    <property type="match status" value="1"/>
</dbReference>
<dbReference type="FunFam" id="3.20.20.120:FF:000001">
    <property type="entry name" value="Enolase"/>
    <property type="match status" value="1"/>
</dbReference>
<dbReference type="FunFam" id="3.30.390.10:FF:000001">
    <property type="entry name" value="Enolase"/>
    <property type="match status" value="1"/>
</dbReference>
<dbReference type="Gene3D" id="3.20.20.120">
    <property type="entry name" value="Enolase-like C-terminal domain"/>
    <property type="match status" value="1"/>
</dbReference>
<dbReference type="Gene3D" id="3.30.390.10">
    <property type="entry name" value="Enolase-like, N-terminal domain"/>
    <property type="match status" value="1"/>
</dbReference>
<dbReference type="HAMAP" id="MF_00318">
    <property type="entry name" value="Enolase"/>
    <property type="match status" value="1"/>
</dbReference>
<dbReference type="InterPro" id="IPR000941">
    <property type="entry name" value="Enolase"/>
</dbReference>
<dbReference type="InterPro" id="IPR036849">
    <property type="entry name" value="Enolase-like_C_sf"/>
</dbReference>
<dbReference type="InterPro" id="IPR029017">
    <property type="entry name" value="Enolase-like_N"/>
</dbReference>
<dbReference type="InterPro" id="IPR020810">
    <property type="entry name" value="Enolase_C"/>
</dbReference>
<dbReference type="InterPro" id="IPR020809">
    <property type="entry name" value="Enolase_CS"/>
</dbReference>
<dbReference type="InterPro" id="IPR020811">
    <property type="entry name" value="Enolase_N"/>
</dbReference>
<dbReference type="NCBIfam" id="TIGR01060">
    <property type="entry name" value="eno"/>
    <property type="match status" value="1"/>
</dbReference>
<dbReference type="PANTHER" id="PTHR11902">
    <property type="entry name" value="ENOLASE"/>
    <property type="match status" value="1"/>
</dbReference>
<dbReference type="PANTHER" id="PTHR11902:SF1">
    <property type="entry name" value="ENOLASE"/>
    <property type="match status" value="1"/>
</dbReference>
<dbReference type="Pfam" id="PF00113">
    <property type="entry name" value="Enolase_C"/>
    <property type="match status" value="1"/>
</dbReference>
<dbReference type="Pfam" id="PF03952">
    <property type="entry name" value="Enolase_N"/>
    <property type="match status" value="1"/>
</dbReference>
<dbReference type="PIRSF" id="PIRSF001400">
    <property type="entry name" value="Enolase"/>
    <property type="match status" value="1"/>
</dbReference>
<dbReference type="PRINTS" id="PR00148">
    <property type="entry name" value="ENOLASE"/>
</dbReference>
<dbReference type="SFLD" id="SFLDS00001">
    <property type="entry name" value="Enolase"/>
    <property type="match status" value="1"/>
</dbReference>
<dbReference type="SFLD" id="SFLDF00002">
    <property type="entry name" value="enolase"/>
    <property type="match status" value="1"/>
</dbReference>
<dbReference type="SMART" id="SM01192">
    <property type="entry name" value="Enolase_C"/>
    <property type="match status" value="1"/>
</dbReference>
<dbReference type="SMART" id="SM01193">
    <property type="entry name" value="Enolase_N"/>
    <property type="match status" value="1"/>
</dbReference>
<dbReference type="SUPFAM" id="SSF51604">
    <property type="entry name" value="Enolase C-terminal domain-like"/>
    <property type="match status" value="1"/>
</dbReference>
<dbReference type="SUPFAM" id="SSF54826">
    <property type="entry name" value="Enolase N-terminal domain-like"/>
    <property type="match status" value="1"/>
</dbReference>
<dbReference type="PROSITE" id="PS00164">
    <property type="entry name" value="ENOLASE"/>
    <property type="match status" value="1"/>
</dbReference>
<evidence type="ECO:0000255" key="1">
    <source>
        <dbReference type="HAMAP-Rule" id="MF_00318"/>
    </source>
</evidence>
<organism>
    <name type="scientific">Staphylococcus saprophyticus subsp. saprophyticus (strain ATCC 15305 / DSM 20229 / NCIMB 8711 / NCTC 7292 / S-41)</name>
    <dbReference type="NCBI Taxonomy" id="342451"/>
    <lineage>
        <taxon>Bacteria</taxon>
        <taxon>Bacillati</taxon>
        <taxon>Bacillota</taxon>
        <taxon>Bacilli</taxon>
        <taxon>Bacillales</taxon>
        <taxon>Staphylococcaceae</taxon>
        <taxon>Staphylococcus</taxon>
    </lineage>
</organism>
<protein>
    <recommendedName>
        <fullName evidence="1">Enolase</fullName>
        <ecNumber evidence="1">4.2.1.11</ecNumber>
    </recommendedName>
    <alternativeName>
        <fullName evidence="1">2-phospho-D-glycerate hydro-lyase</fullName>
    </alternativeName>
    <alternativeName>
        <fullName evidence="1">2-phosphoglycerate dehydratase</fullName>
    </alternativeName>
</protein>
<gene>
    <name evidence="1" type="primary">eno</name>
    <name type="ordered locus">SSP1912</name>
</gene>
<reference key="1">
    <citation type="journal article" date="2005" name="Proc. Natl. Acad. Sci. U.S.A.">
        <title>Whole genome sequence of Staphylococcus saprophyticus reveals the pathogenesis of uncomplicated urinary tract infection.</title>
        <authorList>
            <person name="Kuroda M."/>
            <person name="Yamashita A."/>
            <person name="Hirakawa H."/>
            <person name="Kumano M."/>
            <person name="Morikawa K."/>
            <person name="Higashide M."/>
            <person name="Maruyama A."/>
            <person name="Inose Y."/>
            <person name="Matoba K."/>
            <person name="Toh H."/>
            <person name="Kuhara S."/>
            <person name="Hattori M."/>
            <person name="Ohta T."/>
        </authorList>
    </citation>
    <scope>NUCLEOTIDE SEQUENCE [LARGE SCALE GENOMIC DNA]</scope>
    <source>
        <strain>ATCC 15305 / DSM 20229 / NCIMB 8711 / NCTC 7292 / S-41</strain>
    </source>
</reference>
<sequence>MPIITDVYAREVLDSRGNPTVEVEVLTESGAFGRALVPSGASTGEHEAVELRDGDKSRYLGKGVTKAVDNVNEIIAPELIEGEFSVLEQVSIDKMMIQLDGTENKGKLGANAILGVSIAVARAAADLLGQPLYKYLGGFNGKQLPVPMMNIVNGGSHSDAPIAFQEFMVLPVGAESFKESLRWGAEIFHNLKSILKNRGLETAVGDEGGFAPKFEGTEDAVETILEAIKAVGLEPGKDVFLGFDCASSEFFEDGVYNYAKFEGENGAKRSAEEQVDYLEELVNKYPIITIEDGMDENDWDGWKVLTDRIGDKVQLVGDDLFVTNTVKLSEGIEKGIGNSILIKVNQIGTLTETFDAIEMAQKAGYTAVVSHRSGETEDTTISDIAVATNAGQIKTGSLSRTDRIAKYNQLLRIEDELYETGKFDGLKSFYNLSK</sequence>
<comment type="function">
    <text evidence="1">Catalyzes the reversible conversion of 2-phosphoglycerate (2-PG) into phosphoenolpyruvate (PEP). It is essential for the degradation of carbohydrates via glycolysis.</text>
</comment>
<comment type="catalytic activity">
    <reaction evidence="1">
        <text>(2R)-2-phosphoglycerate = phosphoenolpyruvate + H2O</text>
        <dbReference type="Rhea" id="RHEA:10164"/>
        <dbReference type="ChEBI" id="CHEBI:15377"/>
        <dbReference type="ChEBI" id="CHEBI:58289"/>
        <dbReference type="ChEBI" id="CHEBI:58702"/>
        <dbReference type="EC" id="4.2.1.11"/>
    </reaction>
</comment>
<comment type="cofactor">
    <cofactor evidence="1">
        <name>Mg(2+)</name>
        <dbReference type="ChEBI" id="CHEBI:18420"/>
    </cofactor>
    <text evidence="1">Binds a second Mg(2+) ion via substrate during catalysis.</text>
</comment>
<comment type="pathway">
    <text evidence="1">Carbohydrate degradation; glycolysis; pyruvate from D-glyceraldehyde 3-phosphate: step 4/5.</text>
</comment>
<comment type="subcellular location">
    <subcellularLocation>
        <location evidence="1">Cytoplasm</location>
    </subcellularLocation>
    <subcellularLocation>
        <location evidence="1">Secreted</location>
    </subcellularLocation>
    <subcellularLocation>
        <location evidence="1">Cell surface</location>
    </subcellularLocation>
    <text evidence="1">Fractions of enolase are present in both the cytoplasm and on the cell surface.</text>
</comment>
<comment type="similarity">
    <text evidence="1">Belongs to the enolase family.</text>
</comment>
<feature type="chain" id="PRO_0000267114" description="Enolase">
    <location>
        <begin position="1"/>
        <end position="434"/>
    </location>
</feature>
<feature type="active site" description="Proton donor" evidence="1">
    <location>
        <position position="207"/>
    </location>
</feature>
<feature type="active site" description="Proton acceptor" evidence="1">
    <location>
        <position position="343"/>
    </location>
</feature>
<feature type="binding site" evidence="1">
    <location>
        <position position="165"/>
    </location>
    <ligand>
        <name>(2R)-2-phosphoglycerate</name>
        <dbReference type="ChEBI" id="CHEBI:58289"/>
    </ligand>
</feature>
<feature type="binding site" evidence="1">
    <location>
        <position position="244"/>
    </location>
    <ligand>
        <name>Mg(2+)</name>
        <dbReference type="ChEBI" id="CHEBI:18420"/>
    </ligand>
</feature>
<feature type="binding site" evidence="1">
    <location>
        <position position="291"/>
    </location>
    <ligand>
        <name>Mg(2+)</name>
        <dbReference type="ChEBI" id="CHEBI:18420"/>
    </ligand>
</feature>
<feature type="binding site" evidence="1">
    <location>
        <position position="318"/>
    </location>
    <ligand>
        <name>Mg(2+)</name>
        <dbReference type="ChEBI" id="CHEBI:18420"/>
    </ligand>
</feature>
<feature type="binding site" evidence="1">
    <location>
        <position position="343"/>
    </location>
    <ligand>
        <name>(2R)-2-phosphoglycerate</name>
        <dbReference type="ChEBI" id="CHEBI:58289"/>
    </ligand>
</feature>
<feature type="binding site" evidence="1">
    <location>
        <position position="372"/>
    </location>
    <ligand>
        <name>(2R)-2-phosphoglycerate</name>
        <dbReference type="ChEBI" id="CHEBI:58289"/>
    </ligand>
</feature>
<feature type="binding site" evidence="1">
    <location>
        <position position="373"/>
    </location>
    <ligand>
        <name>(2R)-2-phosphoglycerate</name>
        <dbReference type="ChEBI" id="CHEBI:58289"/>
    </ligand>
</feature>
<feature type="binding site" evidence="1">
    <location>
        <position position="394"/>
    </location>
    <ligand>
        <name>(2R)-2-phosphoglycerate</name>
        <dbReference type="ChEBI" id="CHEBI:58289"/>
    </ligand>
</feature>
<keyword id="KW-0963">Cytoplasm</keyword>
<keyword id="KW-0324">Glycolysis</keyword>
<keyword id="KW-0456">Lyase</keyword>
<keyword id="KW-0460">Magnesium</keyword>
<keyword id="KW-0479">Metal-binding</keyword>
<keyword id="KW-1185">Reference proteome</keyword>
<keyword id="KW-0964">Secreted</keyword>
<name>ENO_STAS1</name>
<proteinExistence type="inferred from homology"/>